<protein>
    <recommendedName>
        <fullName evidence="1">dCTP deaminase</fullName>
        <ecNumber evidence="1">3.5.4.13</ecNumber>
    </recommendedName>
    <alternativeName>
        <fullName evidence="1">Deoxycytidine triphosphate deaminase</fullName>
    </alternativeName>
</protein>
<comment type="function">
    <text evidence="1">Catalyzes the deamination of dCTP to dUTP.</text>
</comment>
<comment type="catalytic activity">
    <reaction evidence="1">
        <text>dCTP + H2O + H(+) = dUTP + NH4(+)</text>
        <dbReference type="Rhea" id="RHEA:22680"/>
        <dbReference type="ChEBI" id="CHEBI:15377"/>
        <dbReference type="ChEBI" id="CHEBI:15378"/>
        <dbReference type="ChEBI" id="CHEBI:28938"/>
        <dbReference type="ChEBI" id="CHEBI:61481"/>
        <dbReference type="ChEBI" id="CHEBI:61555"/>
        <dbReference type="EC" id="3.5.4.13"/>
    </reaction>
</comment>
<comment type="pathway">
    <text evidence="1">Pyrimidine metabolism; dUMP biosynthesis; dUMP from dCTP (dUTP route): step 1/2.</text>
</comment>
<comment type="subunit">
    <text evidence="1">Homotrimer.</text>
</comment>
<comment type="similarity">
    <text evidence="1">Belongs to the dCTP deaminase family.</text>
</comment>
<name>DCD_SALNS</name>
<evidence type="ECO:0000255" key="1">
    <source>
        <dbReference type="HAMAP-Rule" id="MF_00146"/>
    </source>
</evidence>
<evidence type="ECO:0000256" key="2">
    <source>
        <dbReference type="SAM" id="MobiDB-lite"/>
    </source>
</evidence>
<feature type="chain" id="PRO_1000096451" description="dCTP deaminase">
    <location>
        <begin position="1"/>
        <end position="193"/>
    </location>
</feature>
<feature type="region of interest" description="Disordered" evidence="2">
    <location>
        <begin position="169"/>
        <end position="193"/>
    </location>
</feature>
<feature type="active site" description="Proton donor/acceptor" evidence="1">
    <location>
        <position position="138"/>
    </location>
</feature>
<feature type="binding site" evidence="1">
    <location>
        <begin position="110"/>
        <end position="115"/>
    </location>
    <ligand>
        <name>dCTP</name>
        <dbReference type="ChEBI" id="CHEBI:61481"/>
    </ligand>
</feature>
<feature type="binding site" evidence="1">
    <location>
        <position position="128"/>
    </location>
    <ligand>
        <name>dCTP</name>
        <dbReference type="ChEBI" id="CHEBI:61481"/>
    </ligand>
</feature>
<feature type="binding site" evidence="1">
    <location>
        <begin position="136"/>
        <end position="138"/>
    </location>
    <ligand>
        <name>dCTP</name>
        <dbReference type="ChEBI" id="CHEBI:61481"/>
    </ligand>
</feature>
<feature type="binding site" evidence="1">
    <location>
        <position position="171"/>
    </location>
    <ligand>
        <name>dCTP</name>
        <dbReference type="ChEBI" id="CHEBI:61481"/>
    </ligand>
</feature>
<feature type="binding site" evidence="1">
    <location>
        <position position="178"/>
    </location>
    <ligand>
        <name>dCTP</name>
        <dbReference type="ChEBI" id="CHEBI:61481"/>
    </ligand>
</feature>
<feature type="binding site" evidence="1">
    <location>
        <position position="182"/>
    </location>
    <ligand>
        <name>dCTP</name>
        <dbReference type="ChEBI" id="CHEBI:61481"/>
    </ligand>
</feature>
<keyword id="KW-0378">Hydrolase</keyword>
<keyword id="KW-0546">Nucleotide metabolism</keyword>
<keyword id="KW-0547">Nucleotide-binding</keyword>
<accession>B4SX92</accession>
<proteinExistence type="inferred from homology"/>
<gene>
    <name evidence="1" type="primary">dcd</name>
    <name type="ordered locus">SNSL254_A2304</name>
</gene>
<sequence>MRLCDRDIEAWLDEGRLSITPRPPVERINGATVDVRLGNKFRTFRGHTAAFIDLSGPKDEVSAALDRVMSDEIVLPDGEAFYLHPGELALAVTFESVTLPPDLVGWLDGRSSLARLGLMVHVTAHRIDPGWSGCIVLEFYNSGKLPLALRPGMLIGALSFEPLSGPAARPYNRRQDAKYRDQQGAVASRIDKD</sequence>
<reference key="1">
    <citation type="journal article" date="2011" name="J. Bacteriol.">
        <title>Comparative genomics of 28 Salmonella enterica isolates: evidence for CRISPR-mediated adaptive sublineage evolution.</title>
        <authorList>
            <person name="Fricke W.F."/>
            <person name="Mammel M.K."/>
            <person name="McDermott P.F."/>
            <person name="Tartera C."/>
            <person name="White D.G."/>
            <person name="Leclerc J.E."/>
            <person name="Ravel J."/>
            <person name="Cebula T.A."/>
        </authorList>
    </citation>
    <scope>NUCLEOTIDE SEQUENCE [LARGE SCALE GENOMIC DNA]</scope>
    <source>
        <strain>SL254</strain>
    </source>
</reference>
<organism>
    <name type="scientific">Salmonella newport (strain SL254)</name>
    <dbReference type="NCBI Taxonomy" id="423368"/>
    <lineage>
        <taxon>Bacteria</taxon>
        <taxon>Pseudomonadati</taxon>
        <taxon>Pseudomonadota</taxon>
        <taxon>Gammaproteobacteria</taxon>
        <taxon>Enterobacterales</taxon>
        <taxon>Enterobacteriaceae</taxon>
        <taxon>Salmonella</taxon>
    </lineage>
</organism>
<dbReference type="EC" id="3.5.4.13" evidence="1"/>
<dbReference type="EMBL" id="CP001113">
    <property type="protein sequence ID" value="ACF62486.1"/>
    <property type="molecule type" value="Genomic_DNA"/>
</dbReference>
<dbReference type="RefSeq" id="WP_001234783.1">
    <property type="nucleotide sequence ID" value="NZ_CCMR01000002.1"/>
</dbReference>
<dbReference type="SMR" id="B4SX92"/>
<dbReference type="KEGG" id="see:SNSL254_A2304"/>
<dbReference type="HOGENOM" id="CLU_087476_2_0_6"/>
<dbReference type="UniPathway" id="UPA00610">
    <property type="reaction ID" value="UER00665"/>
</dbReference>
<dbReference type="Proteomes" id="UP000008824">
    <property type="component" value="Chromosome"/>
</dbReference>
<dbReference type="GO" id="GO:0008829">
    <property type="term" value="F:dCTP deaminase activity"/>
    <property type="evidence" value="ECO:0007669"/>
    <property type="project" value="UniProtKB-UniRule"/>
</dbReference>
<dbReference type="GO" id="GO:0000166">
    <property type="term" value="F:nucleotide binding"/>
    <property type="evidence" value="ECO:0007669"/>
    <property type="project" value="UniProtKB-KW"/>
</dbReference>
<dbReference type="GO" id="GO:0006226">
    <property type="term" value="P:dUMP biosynthetic process"/>
    <property type="evidence" value="ECO:0007669"/>
    <property type="project" value="UniProtKB-UniPathway"/>
</dbReference>
<dbReference type="GO" id="GO:0006229">
    <property type="term" value="P:dUTP biosynthetic process"/>
    <property type="evidence" value="ECO:0007669"/>
    <property type="project" value="UniProtKB-UniRule"/>
</dbReference>
<dbReference type="GO" id="GO:0015949">
    <property type="term" value="P:nucleobase-containing small molecule interconversion"/>
    <property type="evidence" value="ECO:0007669"/>
    <property type="project" value="TreeGrafter"/>
</dbReference>
<dbReference type="CDD" id="cd07557">
    <property type="entry name" value="trimeric_dUTPase"/>
    <property type="match status" value="1"/>
</dbReference>
<dbReference type="FunFam" id="2.70.40.10:FF:000003">
    <property type="entry name" value="dCTP deaminase"/>
    <property type="match status" value="1"/>
</dbReference>
<dbReference type="Gene3D" id="2.70.40.10">
    <property type="match status" value="1"/>
</dbReference>
<dbReference type="HAMAP" id="MF_00146">
    <property type="entry name" value="dCTP_deaminase"/>
    <property type="match status" value="1"/>
</dbReference>
<dbReference type="InterPro" id="IPR011962">
    <property type="entry name" value="dCTP_deaminase"/>
</dbReference>
<dbReference type="InterPro" id="IPR036157">
    <property type="entry name" value="dUTPase-like_sf"/>
</dbReference>
<dbReference type="InterPro" id="IPR033704">
    <property type="entry name" value="dUTPase_trimeric"/>
</dbReference>
<dbReference type="NCBIfam" id="TIGR02274">
    <property type="entry name" value="dCTP_deam"/>
    <property type="match status" value="1"/>
</dbReference>
<dbReference type="PANTHER" id="PTHR42680">
    <property type="entry name" value="DCTP DEAMINASE"/>
    <property type="match status" value="1"/>
</dbReference>
<dbReference type="PANTHER" id="PTHR42680:SF3">
    <property type="entry name" value="DCTP DEAMINASE"/>
    <property type="match status" value="1"/>
</dbReference>
<dbReference type="Pfam" id="PF22769">
    <property type="entry name" value="DCD"/>
    <property type="match status" value="1"/>
</dbReference>
<dbReference type="SUPFAM" id="SSF51283">
    <property type="entry name" value="dUTPase-like"/>
    <property type="match status" value="1"/>
</dbReference>